<dbReference type="EC" id="4.3.2.10" evidence="1"/>
<dbReference type="EMBL" id="CP000377">
    <property type="protein sequence ID" value="ABF64773.1"/>
    <property type="molecule type" value="Genomic_DNA"/>
</dbReference>
<dbReference type="RefSeq" id="WP_011539365.1">
    <property type="nucleotide sequence ID" value="NC_008044.1"/>
</dbReference>
<dbReference type="SMR" id="Q1GEZ3"/>
<dbReference type="STRING" id="292414.TM1040_2041"/>
<dbReference type="KEGG" id="sit:TM1040_2041"/>
<dbReference type="eggNOG" id="COG0107">
    <property type="taxonomic scope" value="Bacteria"/>
</dbReference>
<dbReference type="HOGENOM" id="CLU_048577_4_0_5"/>
<dbReference type="OrthoDB" id="9781903at2"/>
<dbReference type="UniPathway" id="UPA00031">
    <property type="reaction ID" value="UER00010"/>
</dbReference>
<dbReference type="Proteomes" id="UP000000636">
    <property type="component" value="Chromosome"/>
</dbReference>
<dbReference type="GO" id="GO:0005737">
    <property type="term" value="C:cytoplasm"/>
    <property type="evidence" value="ECO:0007669"/>
    <property type="project" value="UniProtKB-SubCell"/>
</dbReference>
<dbReference type="GO" id="GO:0000107">
    <property type="term" value="F:imidazoleglycerol-phosphate synthase activity"/>
    <property type="evidence" value="ECO:0007669"/>
    <property type="project" value="UniProtKB-UniRule"/>
</dbReference>
<dbReference type="GO" id="GO:0016829">
    <property type="term" value="F:lyase activity"/>
    <property type="evidence" value="ECO:0007669"/>
    <property type="project" value="UniProtKB-KW"/>
</dbReference>
<dbReference type="GO" id="GO:0000105">
    <property type="term" value="P:L-histidine biosynthetic process"/>
    <property type="evidence" value="ECO:0007669"/>
    <property type="project" value="UniProtKB-UniRule"/>
</dbReference>
<dbReference type="CDD" id="cd04731">
    <property type="entry name" value="HisF"/>
    <property type="match status" value="1"/>
</dbReference>
<dbReference type="FunFam" id="3.20.20.70:FF:000006">
    <property type="entry name" value="Imidazole glycerol phosphate synthase subunit HisF"/>
    <property type="match status" value="1"/>
</dbReference>
<dbReference type="Gene3D" id="3.20.20.70">
    <property type="entry name" value="Aldolase class I"/>
    <property type="match status" value="1"/>
</dbReference>
<dbReference type="HAMAP" id="MF_01013">
    <property type="entry name" value="HisF"/>
    <property type="match status" value="1"/>
</dbReference>
<dbReference type="InterPro" id="IPR013785">
    <property type="entry name" value="Aldolase_TIM"/>
</dbReference>
<dbReference type="InterPro" id="IPR006062">
    <property type="entry name" value="His_biosynth"/>
</dbReference>
<dbReference type="InterPro" id="IPR004651">
    <property type="entry name" value="HisF"/>
</dbReference>
<dbReference type="InterPro" id="IPR050064">
    <property type="entry name" value="IGPS_HisA/HisF"/>
</dbReference>
<dbReference type="InterPro" id="IPR011060">
    <property type="entry name" value="RibuloseP-bd_barrel"/>
</dbReference>
<dbReference type="NCBIfam" id="TIGR00735">
    <property type="entry name" value="hisF"/>
    <property type="match status" value="1"/>
</dbReference>
<dbReference type="PANTHER" id="PTHR21235:SF2">
    <property type="entry name" value="IMIDAZOLE GLYCEROL PHOSPHATE SYNTHASE HISHF"/>
    <property type="match status" value="1"/>
</dbReference>
<dbReference type="PANTHER" id="PTHR21235">
    <property type="entry name" value="IMIDAZOLE GLYCEROL PHOSPHATE SYNTHASE SUBUNIT HISF/H IGP SYNTHASE SUBUNIT HISF/H"/>
    <property type="match status" value="1"/>
</dbReference>
<dbReference type="Pfam" id="PF00977">
    <property type="entry name" value="His_biosynth"/>
    <property type="match status" value="1"/>
</dbReference>
<dbReference type="SUPFAM" id="SSF51366">
    <property type="entry name" value="Ribulose-phoshate binding barrel"/>
    <property type="match status" value="1"/>
</dbReference>
<evidence type="ECO:0000255" key="1">
    <source>
        <dbReference type="HAMAP-Rule" id="MF_01013"/>
    </source>
</evidence>
<organism>
    <name type="scientific">Ruegeria sp. (strain TM1040)</name>
    <name type="common">Silicibacter sp.</name>
    <dbReference type="NCBI Taxonomy" id="292414"/>
    <lineage>
        <taxon>Bacteria</taxon>
        <taxon>Pseudomonadati</taxon>
        <taxon>Pseudomonadota</taxon>
        <taxon>Alphaproteobacteria</taxon>
        <taxon>Rhodobacterales</taxon>
        <taxon>Roseobacteraceae</taxon>
        <taxon>Ruegeria</taxon>
    </lineage>
</organism>
<accession>Q1GEZ3</accession>
<name>HIS6_RUEST</name>
<feature type="chain" id="PRO_1000063153" description="Imidazole glycerol phosphate synthase subunit HisF">
    <location>
        <begin position="1"/>
        <end position="253"/>
    </location>
</feature>
<feature type="active site" evidence="1">
    <location>
        <position position="11"/>
    </location>
</feature>
<feature type="active site" evidence="1">
    <location>
        <position position="130"/>
    </location>
</feature>
<sequence length="253" mass="26631">MLKTRLIPCLDVADGRVVKGVNFVGLRDAGDPVEAARAYDAAGADEICFLDIHATHENRGTMFDMVRRTAEQCFVPLTVGGGVRTKDDVRALLLAGADKVSFNSAAVANPDVIAEAADQFGSQCIVCAIDAKSVAPGKWEIFTHGGRRETGIDAVEFARLVTAKGAGEILLTSMDRDGTKSGFNLEMTRAISDAVNVPVIASGGVGTLDHLVDGVTKGGASAVLAASIFHFGEYTVQEAKEHMIANGIPMRLQ</sequence>
<protein>
    <recommendedName>
        <fullName evidence="1">Imidazole glycerol phosphate synthase subunit HisF</fullName>
        <ecNumber evidence="1">4.3.2.10</ecNumber>
    </recommendedName>
    <alternativeName>
        <fullName evidence="1">IGP synthase cyclase subunit</fullName>
    </alternativeName>
    <alternativeName>
        <fullName evidence="1">IGP synthase subunit HisF</fullName>
    </alternativeName>
    <alternativeName>
        <fullName evidence="1">ImGP synthase subunit HisF</fullName>
        <shortName evidence="1">IGPS subunit HisF</shortName>
    </alternativeName>
</protein>
<keyword id="KW-0028">Amino-acid biosynthesis</keyword>
<keyword id="KW-0963">Cytoplasm</keyword>
<keyword id="KW-0368">Histidine biosynthesis</keyword>
<keyword id="KW-0456">Lyase</keyword>
<keyword id="KW-1185">Reference proteome</keyword>
<reference key="1">
    <citation type="submission" date="2006-05" db="EMBL/GenBank/DDBJ databases">
        <title>Complete sequence of chromosome of Silicibacter sp. TM1040.</title>
        <authorList>
            <consortium name="US DOE Joint Genome Institute"/>
            <person name="Copeland A."/>
            <person name="Lucas S."/>
            <person name="Lapidus A."/>
            <person name="Barry K."/>
            <person name="Detter J.C."/>
            <person name="Glavina del Rio T."/>
            <person name="Hammon N."/>
            <person name="Israni S."/>
            <person name="Dalin E."/>
            <person name="Tice H."/>
            <person name="Pitluck S."/>
            <person name="Brettin T."/>
            <person name="Bruce D."/>
            <person name="Han C."/>
            <person name="Tapia R."/>
            <person name="Goodwin L."/>
            <person name="Thompson L.S."/>
            <person name="Gilna P."/>
            <person name="Schmutz J."/>
            <person name="Larimer F."/>
            <person name="Land M."/>
            <person name="Hauser L."/>
            <person name="Kyrpides N."/>
            <person name="Kim E."/>
            <person name="Belas R."/>
            <person name="Moran M.A."/>
            <person name="Buchan A."/>
            <person name="Gonzalez J.M."/>
            <person name="Schell M.A."/>
            <person name="Sun F."/>
            <person name="Richardson P."/>
        </authorList>
    </citation>
    <scope>NUCLEOTIDE SEQUENCE [LARGE SCALE GENOMIC DNA]</scope>
    <source>
        <strain>TM1040</strain>
    </source>
</reference>
<proteinExistence type="inferred from homology"/>
<comment type="function">
    <text evidence="1">IGPS catalyzes the conversion of PRFAR and glutamine to IGP, AICAR and glutamate. The HisF subunit catalyzes the cyclization activity that produces IGP and AICAR from PRFAR using the ammonia provided by the HisH subunit.</text>
</comment>
<comment type="catalytic activity">
    <reaction evidence="1">
        <text>5-[(5-phospho-1-deoxy-D-ribulos-1-ylimino)methylamino]-1-(5-phospho-beta-D-ribosyl)imidazole-4-carboxamide + L-glutamine = D-erythro-1-(imidazol-4-yl)glycerol 3-phosphate + 5-amino-1-(5-phospho-beta-D-ribosyl)imidazole-4-carboxamide + L-glutamate + H(+)</text>
        <dbReference type="Rhea" id="RHEA:24793"/>
        <dbReference type="ChEBI" id="CHEBI:15378"/>
        <dbReference type="ChEBI" id="CHEBI:29985"/>
        <dbReference type="ChEBI" id="CHEBI:58278"/>
        <dbReference type="ChEBI" id="CHEBI:58359"/>
        <dbReference type="ChEBI" id="CHEBI:58475"/>
        <dbReference type="ChEBI" id="CHEBI:58525"/>
        <dbReference type="EC" id="4.3.2.10"/>
    </reaction>
</comment>
<comment type="pathway">
    <text evidence="1">Amino-acid biosynthesis; L-histidine biosynthesis; L-histidine from 5-phospho-alpha-D-ribose 1-diphosphate: step 5/9.</text>
</comment>
<comment type="subunit">
    <text evidence="1">Heterodimer of HisH and HisF.</text>
</comment>
<comment type="subcellular location">
    <subcellularLocation>
        <location evidence="1">Cytoplasm</location>
    </subcellularLocation>
</comment>
<comment type="similarity">
    <text evidence="1">Belongs to the HisA/HisF family.</text>
</comment>
<gene>
    <name evidence="1" type="primary">hisF</name>
    <name type="ordered locus">TM1040_2041</name>
</gene>